<feature type="chain" id="PRO_0000368307" description="ATP synthase subunit b">
    <location>
        <begin position="1"/>
        <end position="167"/>
    </location>
</feature>
<feature type="transmembrane region" description="Helical" evidence="1">
    <location>
        <begin position="10"/>
        <end position="30"/>
    </location>
</feature>
<sequence>MLGLVSFDATFFFQLANTLIMFLILKHFLFQPVTEFMDKRTKAIEESIAEAELKNKESNELKAQYESKLTEIKKERTQIIDEAVRNAQKRGDEIVSAAGVEARRTIEKATAEIEREKQKMMNELKGEISQLAIAAAQKVIEKDLDQSAHQQMIQQFIDKAGETQWQN</sequence>
<dbReference type="EMBL" id="CP000853">
    <property type="protein sequence ID" value="ABW20095.1"/>
    <property type="molecule type" value="Genomic_DNA"/>
</dbReference>
<dbReference type="RefSeq" id="WP_012160402.1">
    <property type="nucleotide sequence ID" value="NC_009922.1"/>
</dbReference>
<dbReference type="SMR" id="A8MJW3"/>
<dbReference type="STRING" id="350688.Clos_2564"/>
<dbReference type="KEGG" id="aoe:Clos_2564"/>
<dbReference type="eggNOG" id="COG0711">
    <property type="taxonomic scope" value="Bacteria"/>
</dbReference>
<dbReference type="HOGENOM" id="CLU_079215_4_0_9"/>
<dbReference type="OrthoDB" id="9795863at2"/>
<dbReference type="Proteomes" id="UP000000269">
    <property type="component" value="Chromosome"/>
</dbReference>
<dbReference type="GO" id="GO:0005886">
    <property type="term" value="C:plasma membrane"/>
    <property type="evidence" value="ECO:0007669"/>
    <property type="project" value="UniProtKB-SubCell"/>
</dbReference>
<dbReference type="GO" id="GO:0045259">
    <property type="term" value="C:proton-transporting ATP synthase complex"/>
    <property type="evidence" value="ECO:0007669"/>
    <property type="project" value="UniProtKB-KW"/>
</dbReference>
<dbReference type="GO" id="GO:0046933">
    <property type="term" value="F:proton-transporting ATP synthase activity, rotational mechanism"/>
    <property type="evidence" value="ECO:0007669"/>
    <property type="project" value="UniProtKB-UniRule"/>
</dbReference>
<dbReference type="GO" id="GO:0046961">
    <property type="term" value="F:proton-transporting ATPase activity, rotational mechanism"/>
    <property type="evidence" value="ECO:0007669"/>
    <property type="project" value="TreeGrafter"/>
</dbReference>
<dbReference type="CDD" id="cd06503">
    <property type="entry name" value="ATP-synt_Fo_b"/>
    <property type="match status" value="1"/>
</dbReference>
<dbReference type="Gene3D" id="1.20.5.620">
    <property type="entry name" value="F1F0 ATP synthase subunit B, membrane domain"/>
    <property type="match status" value="1"/>
</dbReference>
<dbReference type="HAMAP" id="MF_01398">
    <property type="entry name" value="ATP_synth_b_bprime"/>
    <property type="match status" value="1"/>
</dbReference>
<dbReference type="InterPro" id="IPR028987">
    <property type="entry name" value="ATP_synth_B-like_membr_sf"/>
</dbReference>
<dbReference type="InterPro" id="IPR002146">
    <property type="entry name" value="ATP_synth_b/b'su_bac/chlpt"/>
</dbReference>
<dbReference type="InterPro" id="IPR005864">
    <property type="entry name" value="ATP_synth_F0_bsu_bac"/>
</dbReference>
<dbReference type="InterPro" id="IPR050059">
    <property type="entry name" value="ATP_synthase_B_chain"/>
</dbReference>
<dbReference type="NCBIfam" id="TIGR01144">
    <property type="entry name" value="ATP_synt_b"/>
    <property type="match status" value="1"/>
</dbReference>
<dbReference type="PANTHER" id="PTHR33445">
    <property type="entry name" value="ATP SYNTHASE SUBUNIT B', CHLOROPLASTIC"/>
    <property type="match status" value="1"/>
</dbReference>
<dbReference type="PANTHER" id="PTHR33445:SF2">
    <property type="entry name" value="ATP SYNTHASE SUBUNIT B', CHLOROPLASTIC"/>
    <property type="match status" value="1"/>
</dbReference>
<dbReference type="Pfam" id="PF00430">
    <property type="entry name" value="ATP-synt_B"/>
    <property type="match status" value="1"/>
</dbReference>
<dbReference type="SUPFAM" id="SSF81573">
    <property type="entry name" value="F1F0 ATP synthase subunit B, membrane domain"/>
    <property type="match status" value="1"/>
</dbReference>
<evidence type="ECO:0000255" key="1">
    <source>
        <dbReference type="HAMAP-Rule" id="MF_01398"/>
    </source>
</evidence>
<comment type="function">
    <text evidence="1">F(1)F(0) ATP synthase produces ATP from ADP in the presence of a proton or sodium gradient. F-type ATPases consist of two structural domains, F(1) containing the extramembraneous catalytic core and F(0) containing the membrane proton channel, linked together by a central stalk and a peripheral stalk. During catalysis, ATP synthesis in the catalytic domain of F(1) is coupled via a rotary mechanism of the central stalk subunits to proton translocation.</text>
</comment>
<comment type="function">
    <text evidence="1">Component of the F(0) channel, it forms part of the peripheral stalk, linking F(1) to F(0).</text>
</comment>
<comment type="subunit">
    <text evidence="1">F-type ATPases have 2 components, F(1) - the catalytic core - and F(0) - the membrane proton channel. F(1) has five subunits: alpha(3), beta(3), gamma(1), delta(1), epsilon(1). F(0) has three main subunits: a(1), b(2) and c(10-14). The alpha and beta chains form an alternating ring which encloses part of the gamma chain. F(1) is attached to F(0) by a central stalk formed by the gamma and epsilon chains, while a peripheral stalk is formed by the delta and b chains.</text>
</comment>
<comment type="subcellular location">
    <subcellularLocation>
        <location evidence="1">Cell membrane</location>
        <topology evidence="1">Single-pass membrane protein</topology>
    </subcellularLocation>
</comment>
<comment type="similarity">
    <text evidence="1">Belongs to the ATPase B chain family.</text>
</comment>
<gene>
    <name evidence="1" type="primary">atpF</name>
    <name type="ordered locus">Clos_2564</name>
</gene>
<accession>A8MJW3</accession>
<proteinExistence type="inferred from homology"/>
<organism>
    <name type="scientific">Alkaliphilus oremlandii (strain OhILAs)</name>
    <name type="common">Clostridium oremlandii (strain OhILAs)</name>
    <dbReference type="NCBI Taxonomy" id="350688"/>
    <lineage>
        <taxon>Bacteria</taxon>
        <taxon>Bacillati</taxon>
        <taxon>Bacillota</taxon>
        <taxon>Clostridia</taxon>
        <taxon>Peptostreptococcales</taxon>
        <taxon>Natronincolaceae</taxon>
        <taxon>Alkaliphilus</taxon>
    </lineage>
</organism>
<keyword id="KW-0066">ATP synthesis</keyword>
<keyword id="KW-1003">Cell membrane</keyword>
<keyword id="KW-0138">CF(0)</keyword>
<keyword id="KW-0375">Hydrogen ion transport</keyword>
<keyword id="KW-0406">Ion transport</keyword>
<keyword id="KW-0472">Membrane</keyword>
<keyword id="KW-1185">Reference proteome</keyword>
<keyword id="KW-0812">Transmembrane</keyword>
<keyword id="KW-1133">Transmembrane helix</keyword>
<keyword id="KW-0813">Transport</keyword>
<protein>
    <recommendedName>
        <fullName evidence="1">ATP synthase subunit b</fullName>
    </recommendedName>
    <alternativeName>
        <fullName evidence="1">ATP synthase F(0) sector subunit b</fullName>
    </alternativeName>
    <alternativeName>
        <fullName evidence="1">ATPase subunit I</fullName>
    </alternativeName>
    <alternativeName>
        <fullName evidence="1">F-type ATPase subunit b</fullName>
        <shortName evidence="1">F-ATPase subunit b</shortName>
    </alternativeName>
</protein>
<name>ATPF_ALKOO</name>
<reference key="1">
    <citation type="submission" date="2007-10" db="EMBL/GenBank/DDBJ databases">
        <title>Complete genome of Alkaliphilus oremlandii OhILAs.</title>
        <authorList>
            <person name="Copeland A."/>
            <person name="Lucas S."/>
            <person name="Lapidus A."/>
            <person name="Barry K."/>
            <person name="Detter J.C."/>
            <person name="Glavina del Rio T."/>
            <person name="Hammon N."/>
            <person name="Israni S."/>
            <person name="Dalin E."/>
            <person name="Tice H."/>
            <person name="Pitluck S."/>
            <person name="Chain P."/>
            <person name="Malfatti S."/>
            <person name="Shin M."/>
            <person name="Vergez L."/>
            <person name="Schmutz J."/>
            <person name="Larimer F."/>
            <person name="Land M."/>
            <person name="Hauser L."/>
            <person name="Kyrpides N."/>
            <person name="Mikhailova N."/>
            <person name="Stolz J.F."/>
            <person name="Dawson A."/>
            <person name="Fisher E."/>
            <person name="Crable B."/>
            <person name="Perera E."/>
            <person name="Lisak J."/>
            <person name="Ranganathan M."/>
            <person name="Basu P."/>
            <person name="Richardson P."/>
        </authorList>
    </citation>
    <scope>NUCLEOTIDE SEQUENCE [LARGE SCALE GENOMIC DNA]</scope>
    <source>
        <strain>OhILAs</strain>
    </source>
</reference>